<sequence length="274" mass="30238">MEKPPVDPQNPWLELRRLTPARIALGRTGTSLPTRAQLDFQYAHAQARDAVHLPFDHAALSAQLNERQRESLLLHSAAVDRNSYLQRPDLGRKLSDQSAQTLREYAQAHPGGVDLVIVVADGLSALAVHRHTLPFLTRLEEQMSADEWSTAPVVLVEQGRVAIGDEIGQLLGAKMVVMLIGERPGLSSPDSLGLYFTYNPKVGLTDAYRNCISNVRLEGLSYGMAAHRLLYLMREACRRQLSGVNLKDEAQVQTLESEAGTDMKSNFLLDPPPA</sequence>
<proteinExistence type="inferred from homology"/>
<reference key="1">
    <citation type="journal article" date="2009" name="Genome Biol.">
        <title>Genomic and genetic analyses of diversity and plant interactions of Pseudomonas fluorescens.</title>
        <authorList>
            <person name="Silby M.W."/>
            <person name="Cerdeno-Tarraga A.M."/>
            <person name="Vernikos G.S."/>
            <person name="Giddens S.R."/>
            <person name="Jackson R.W."/>
            <person name="Preston G.M."/>
            <person name="Zhang X.-X."/>
            <person name="Moon C.D."/>
            <person name="Gehrig S.M."/>
            <person name="Godfrey S.A.C."/>
            <person name="Knight C.G."/>
            <person name="Malone J.G."/>
            <person name="Robinson Z."/>
            <person name="Spiers A.J."/>
            <person name="Harris S."/>
            <person name="Challis G.L."/>
            <person name="Yaxley A.M."/>
            <person name="Harris D."/>
            <person name="Seeger K."/>
            <person name="Murphy L."/>
            <person name="Rutter S."/>
            <person name="Squares R."/>
            <person name="Quail M.A."/>
            <person name="Saunders E."/>
            <person name="Mavromatis K."/>
            <person name="Brettin T.S."/>
            <person name="Bentley S.D."/>
            <person name="Hothersall J."/>
            <person name="Stephens E."/>
            <person name="Thomas C.M."/>
            <person name="Parkhill J."/>
            <person name="Levy S.B."/>
            <person name="Rainey P.B."/>
            <person name="Thomson N.R."/>
        </authorList>
    </citation>
    <scope>NUCLEOTIDE SEQUENCE [LARGE SCALE GENOMIC DNA]</scope>
    <source>
        <strain>Pf0-1</strain>
    </source>
</reference>
<protein>
    <recommendedName>
        <fullName evidence="1">Ethanolamine ammonia-lyase small subunit</fullName>
        <shortName evidence="1">EAL small subunit</shortName>
        <ecNumber evidence="1">4.3.1.7</ecNumber>
    </recommendedName>
</protein>
<accession>Q3K675</accession>
<evidence type="ECO:0000255" key="1">
    <source>
        <dbReference type="HAMAP-Rule" id="MF_00601"/>
    </source>
</evidence>
<gene>
    <name evidence="1" type="primary">eutC</name>
    <name type="ordered locus">Pfl01_4992</name>
</gene>
<feature type="chain" id="PRO_1000025862" description="Ethanolamine ammonia-lyase small subunit">
    <location>
        <begin position="1"/>
        <end position="274"/>
    </location>
</feature>
<feature type="binding site" evidence="1">
    <location>
        <position position="161"/>
    </location>
    <ligand>
        <name>adenosylcob(III)alamin</name>
        <dbReference type="ChEBI" id="CHEBI:18408"/>
    </ligand>
</feature>
<feature type="binding site" evidence="1">
    <location>
        <position position="182"/>
    </location>
    <ligand>
        <name>adenosylcob(III)alamin</name>
        <dbReference type="ChEBI" id="CHEBI:18408"/>
    </ligand>
</feature>
<feature type="binding site" evidence="1">
    <location>
        <position position="211"/>
    </location>
    <ligand>
        <name>adenosylcob(III)alamin</name>
        <dbReference type="ChEBI" id="CHEBI:18408"/>
    </ligand>
</feature>
<comment type="function">
    <text evidence="1">Catalyzes the deamination of various vicinal amino-alcohols to oxo compounds. Allows this organism to utilize ethanolamine as the sole source of nitrogen and carbon in the presence of external vitamin B12.</text>
</comment>
<comment type="catalytic activity">
    <reaction evidence="1">
        <text>ethanolamine = acetaldehyde + NH4(+)</text>
        <dbReference type="Rhea" id="RHEA:15313"/>
        <dbReference type="ChEBI" id="CHEBI:15343"/>
        <dbReference type="ChEBI" id="CHEBI:28938"/>
        <dbReference type="ChEBI" id="CHEBI:57603"/>
        <dbReference type="EC" id="4.3.1.7"/>
    </reaction>
</comment>
<comment type="cofactor">
    <cofactor evidence="1">
        <name>adenosylcob(III)alamin</name>
        <dbReference type="ChEBI" id="CHEBI:18408"/>
    </cofactor>
    <text evidence="1">Binds between the large and small subunits.</text>
</comment>
<comment type="pathway">
    <text evidence="1">Amine and polyamine degradation; ethanolamine degradation.</text>
</comment>
<comment type="subunit">
    <text evidence="1">The basic unit is a heterodimer which dimerizes to form tetramers. The heterotetramers trimerize; 6 large subunits form a core ring with 6 small subunits projecting outwards.</text>
</comment>
<comment type="subcellular location">
    <subcellularLocation>
        <location evidence="1">Bacterial microcompartment</location>
    </subcellularLocation>
</comment>
<comment type="similarity">
    <text evidence="1">Belongs to the EutC family.</text>
</comment>
<name>EUTC_PSEPF</name>
<keyword id="KW-1283">Bacterial microcompartment</keyword>
<keyword id="KW-0846">Cobalamin</keyword>
<keyword id="KW-0170">Cobalt</keyword>
<keyword id="KW-0456">Lyase</keyword>
<dbReference type="EC" id="4.3.1.7" evidence="1"/>
<dbReference type="EMBL" id="CP000094">
    <property type="protein sequence ID" value="ABA76729.1"/>
    <property type="molecule type" value="Genomic_DNA"/>
</dbReference>
<dbReference type="RefSeq" id="WP_011336117.1">
    <property type="nucleotide sequence ID" value="NC_007492.2"/>
</dbReference>
<dbReference type="SMR" id="Q3K675"/>
<dbReference type="KEGG" id="pfo:Pfl01_4992"/>
<dbReference type="eggNOG" id="COG4302">
    <property type="taxonomic scope" value="Bacteria"/>
</dbReference>
<dbReference type="HOGENOM" id="CLU_068224_1_0_6"/>
<dbReference type="UniPathway" id="UPA00560"/>
<dbReference type="Proteomes" id="UP000002704">
    <property type="component" value="Chromosome"/>
</dbReference>
<dbReference type="GO" id="GO:0009350">
    <property type="term" value="C:ethanolamine ammonia-lyase complex"/>
    <property type="evidence" value="ECO:0007669"/>
    <property type="project" value="UniProtKB-UniRule"/>
</dbReference>
<dbReference type="GO" id="GO:0031471">
    <property type="term" value="C:ethanolamine degradation polyhedral organelle"/>
    <property type="evidence" value="ECO:0007669"/>
    <property type="project" value="UniProtKB-UniRule"/>
</dbReference>
<dbReference type="GO" id="GO:0031419">
    <property type="term" value="F:cobalamin binding"/>
    <property type="evidence" value="ECO:0007669"/>
    <property type="project" value="UniProtKB-UniRule"/>
</dbReference>
<dbReference type="GO" id="GO:0008851">
    <property type="term" value="F:ethanolamine ammonia-lyase activity"/>
    <property type="evidence" value="ECO:0007669"/>
    <property type="project" value="UniProtKB-UniRule"/>
</dbReference>
<dbReference type="GO" id="GO:0006520">
    <property type="term" value="P:amino acid metabolic process"/>
    <property type="evidence" value="ECO:0007669"/>
    <property type="project" value="InterPro"/>
</dbReference>
<dbReference type="GO" id="GO:0046336">
    <property type="term" value="P:ethanolamine catabolic process"/>
    <property type="evidence" value="ECO:0007669"/>
    <property type="project" value="UniProtKB-UniRule"/>
</dbReference>
<dbReference type="FunFam" id="1.10.30.40:FF:000001">
    <property type="entry name" value="Ethanolamine ammonia-lyase light chain"/>
    <property type="match status" value="1"/>
</dbReference>
<dbReference type="FunFam" id="3.40.50.11240:FF:000001">
    <property type="entry name" value="Ethanolamine ammonia-lyase light chain"/>
    <property type="match status" value="1"/>
</dbReference>
<dbReference type="Gene3D" id="3.40.50.11240">
    <property type="entry name" value="Ethanolamine ammonia-lyase light chain (EutC)"/>
    <property type="match status" value="1"/>
</dbReference>
<dbReference type="Gene3D" id="1.10.30.40">
    <property type="entry name" value="Ethanolamine ammonia-lyase light chain (EutC), N-terminal domain"/>
    <property type="match status" value="1"/>
</dbReference>
<dbReference type="HAMAP" id="MF_00601">
    <property type="entry name" value="EutC"/>
    <property type="match status" value="1"/>
</dbReference>
<dbReference type="InterPro" id="IPR009246">
    <property type="entry name" value="EutC"/>
</dbReference>
<dbReference type="InterPro" id="IPR042251">
    <property type="entry name" value="EutC_C"/>
</dbReference>
<dbReference type="InterPro" id="IPR042255">
    <property type="entry name" value="EutC_N"/>
</dbReference>
<dbReference type="NCBIfam" id="NF003971">
    <property type="entry name" value="PRK05465.1"/>
    <property type="match status" value="1"/>
</dbReference>
<dbReference type="PANTHER" id="PTHR39330">
    <property type="entry name" value="ETHANOLAMINE AMMONIA-LYASE LIGHT CHAIN"/>
    <property type="match status" value="1"/>
</dbReference>
<dbReference type="PANTHER" id="PTHR39330:SF1">
    <property type="entry name" value="ETHANOLAMINE AMMONIA-LYASE SMALL SUBUNIT"/>
    <property type="match status" value="1"/>
</dbReference>
<dbReference type="Pfam" id="PF05985">
    <property type="entry name" value="EutC"/>
    <property type="match status" value="1"/>
</dbReference>
<dbReference type="PIRSF" id="PIRSF018982">
    <property type="entry name" value="EutC"/>
    <property type="match status" value="1"/>
</dbReference>
<organism>
    <name type="scientific">Pseudomonas fluorescens (strain Pf0-1)</name>
    <dbReference type="NCBI Taxonomy" id="205922"/>
    <lineage>
        <taxon>Bacteria</taxon>
        <taxon>Pseudomonadati</taxon>
        <taxon>Pseudomonadota</taxon>
        <taxon>Gammaproteobacteria</taxon>
        <taxon>Pseudomonadales</taxon>
        <taxon>Pseudomonadaceae</taxon>
        <taxon>Pseudomonas</taxon>
    </lineage>
</organism>